<protein>
    <recommendedName>
        <fullName>DUF21 domain-containing protein At2g14520</fullName>
    </recommendedName>
    <alternativeName>
        <fullName>CBS domain-containing protein CBSDUF3</fullName>
    </alternativeName>
</protein>
<name>Y2452_ARATH</name>
<proteinExistence type="evidence at transcript level"/>
<feature type="chain" id="PRO_0000411680" description="DUF21 domain-containing protein At2g14520">
    <location>
        <begin position="1"/>
        <end position="423"/>
    </location>
</feature>
<feature type="topological domain" description="Extracellular" evidence="1">
    <location>
        <begin position="1"/>
        <end position="11"/>
    </location>
</feature>
<feature type="transmembrane region" description="Helical" evidence="1">
    <location>
        <begin position="12"/>
        <end position="32"/>
    </location>
</feature>
<feature type="topological domain" description="Cytoplasmic" evidence="1">
    <location>
        <begin position="33"/>
        <end position="70"/>
    </location>
</feature>
<feature type="transmembrane region" description="Helical" evidence="1">
    <location>
        <begin position="71"/>
        <end position="91"/>
    </location>
</feature>
<feature type="topological domain" description="Extracellular" evidence="1">
    <location>
        <begin position="92"/>
        <end position="94"/>
    </location>
</feature>
<feature type="transmembrane region" description="Helical" evidence="1">
    <location>
        <begin position="95"/>
        <end position="115"/>
    </location>
</feature>
<feature type="topological domain" description="Cytoplasmic" evidence="1">
    <location>
        <begin position="116"/>
        <end position="136"/>
    </location>
</feature>
<feature type="transmembrane region" description="Helical" evidence="1">
    <location>
        <begin position="137"/>
        <end position="157"/>
    </location>
</feature>
<feature type="topological domain" description="Extracellular" evidence="1">
    <location>
        <begin position="158"/>
        <end position="423"/>
    </location>
</feature>
<feature type="domain" description="CNNM transmembrane" evidence="3">
    <location>
        <begin position="8"/>
        <end position="191"/>
    </location>
</feature>
<feature type="domain" description="CBS 1" evidence="2">
    <location>
        <begin position="210"/>
        <end position="271"/>
    </location>
</feature>
<feature type="domain" description="CBS 2" evidence="2">
    <location>
        <begin position="275"/>
        <end position="332"/>
    </location>
</feature>
<feature type="domain" description="CBS 3" evidence="2">
    <location>
        <begin position="356"/>
        <end position="415"/>
    </location>
</feature>
<feature type="glycosylation site" description="N-linked (GlcNAc...) asparagine" evidence="1">
    <location>
        <position position="273"/>
    </location>
</feature>
<feature type="glycosylation site" description="N-linked (GlcNAc...) asparagine" evidence="1">
    <location>
        <position position="322"/>
    </location>
</feature>
<dbReference type="EMBL" id="AC006067">
    <property type="protein sequence ID" value="AAD15464.1"/>
    <property type="status" value="ALT_SEQ"/>
    <property type="molecule type" value="Genomic_DNA"/>
</dbReference>
<dbReference type="EMBL" id="CP002685">
    <property type="protein sequence ID" value="AEC06308.1"/>
    <property type="molecule type" value="Genomic_DNA"/>
</dbReference>
<dbReference type="EMBL" id="CP002685">
    <property type="protein sequence ID" value="ANM62035.1"/>
    <property type="molecule type" value="Genomic_DNA"/>
</dbReference>
<dbReference type="EMBL" id="AY080819">
    <property type="status" value="NOT_ANNOTATED_CDS"/>
    <property type="molecule type" value="mRNA"/>
</dbReference>
<dbReference type="PIR" id="B84518">
    <property type="entry name" value="B84518"/>
</dbReference>
<dbReference type="RefSeq" id="NP_001324218.1">
    <property type="nucleotide sequence ID" value="NM_001335425.1"/>
</dbReference>
<dbReference type="RefSeq" id="NP_179058.3">
    <property type="nucleotide sequence ID" value="NM_127015.4"/>
</dbReference>
<dbReference type="SMR" id="Q9ZQR4"/>
<dbReference type="FunCoup" id="Q9ZQR4">
    <property type="interactions" value="931"/>
</dbReference>
<dbReference type="STRING" id="3702.Q9ZQR4"/>
<dbReference type="GlyCosmos" id="Q9ZQR4">
    <property type="glycosylation" value="2 sites, No reported glycans"/>
</dbReference>
<dbReference type="GlyGen" id="Q9ZQR4">
    <property type="glycosylation" value="2 sites"/>
</dbReference>
<dbReference type="iPTMnet" id="Q9ZQR4"/>
<dbReference type="PaxDb" id="3702-AT2G14520.1"/>
<dbReference type="EnsemblPlants" id="AT2G14520.1">
    <property type="protein sequence ID" value="AT2G14520.1"/>
    <property type="gene ID" value="AT2G14520"/>
</dbReference>
<dbReference type="EnsemblPlants" id="AT2G14520.4">
    <property type="protein sequence ID" value="AT2G14520.4"/>
    <property type="gene ID" value="AT2G14520"/>
</dbReference>
<dbReference type="GeneID" id="815939"/>
<dbReference type="Gramene" id="AT2G14520.1">
    <property type="protein sequence ID" value="AT2G14520.1"/>
    <property type="gene ID" value="AT2G14520"/>
</dbReference>
<dbReference type="Gramene" id="AT2G14520.4">
    <property type="protein sequence ID" value="AT2G14520.4"/>
    <property type="gene ID" value="AT2G14520"/>
</dbReference>
<dbReference type="KEGG" id="ath:AT2G14520"/>
<dbReference type="Araport" id="AT2G14520"/>
<dbReference type="TAIR" id="AT2G14520"/>
<dbReference type="eggNOG" id="KOG2118">
    <property type="taxonomic scope" value="Eukaryota"/>
</dbReference>
<dbReference type="HOGENOM" id="CLU_011310_0_1_1"/>
<dbReference type="InParanoid" id="Q9ZQR4"/>
<dbReference type="OMA" id="WCVGSRS"/>
<dbReference type="OrthoDB" id="5353557at2759"/>
<dbReference type="PRO" id="PR:Q9ZQR4"/>
<dbReference type="Proteomes" id="UP000006548">
    <property type="component" value="Chromosome 2"/>
</dbReference>
<dbReference type="ExpressionAtlas" id="Q9ZQR4">
    <property type="expression patterns" value="baseline and differential"/>
</dbReference>
<dbReference type="GO" id="GO:0016020">
    <property type="term" value="C:membrane"/>
    <property type="evidence" value="ECO:0007669"/>
    <property type="project" value="UniProtKB-SubCell"/>
</dbReference>
<dbReference type="GO" id="GO:0010960">
    <property type="term" value="P:magnesium ion homeostasis"/>
    <property type="evidence" value="ECO:0007669"/>
    <property type="project" value="InterPro"/>
</dbReference>
<dbReference type="CDD" id="cd04590">
    <property type="entry name" value="CBS_pair_CorC_HlyC_assoc"/>
    <property type="match status" value="1"/>
</dbReference>
<dbReference type="FunFam" id="3.10.580.10:FF:000015">
    <property type="entry name" value="DUF21 domain-containing protein"/>
    <property type="match status" value="1"/>
</dbReference>
<dbReference type="Gene3D" id="3.10.580.10">
    <property type="entry name" value="CBS-domain"/>
    <property type="match status" value="2"/>
</dbReference>
<dbReference type="InterPro" id="IPR045095">
    <property type="entry name" value="ACDP"/>
</dbReference>
<dbReference type="InterPro" id="IPR000644">
    <property type="entry name" value="CBS_dom"/>
</dbReference>
<dbReference type="InterPro" id="IPR046342">
    <property type="entry name" value="CBS_dom_sf"/>
</dbReference>
<dbReference type="InterPro" id="IPR002550">
    <property type="entry name" value="CNNM"/>
</dbReference>
<dbReference type="InterPro" id="IPR044751">
    <property type="entry name" value="Ion_transp-like_CBS"/>
</dbReference>
<dbReference type="PANTHER" id="PTHR12064:SF59">
    <property type="entry name" value="CNNM TRANSMEMBRANE DOMAIN-CONTAINING PROTEIN"/>
    <property type="match status" value="1"/>
</dbReference>
<dbReference type="PANTHER" id="PTHR12064">
    <property type="entry name" value="METAL TRANSPORTER CNNM"/>
    <property type="match status" value="1"/>
</dbReference>
<dbReference type="Pfam" id="PF01595">
    <property type="entry name" value="CNNM"/>
    <property type="match status" value="1"/>
</dbReference>
<dbReference type="SUPFAM" id="SSF54631">
    <property type="entry name" value="CBS-domain pair"/>
    <property type="match status" value="1"/>
</dbReference>
<dbReference type="PROSITE" id="PS51371">
    <property type="entry name" value="CBS"/>
    <property type="match status" value="3"/>
</dbReference>
<dbReference type="PROSITE" id="PS51846">
    <property type="entry name" value="CNNM"/>
    <property type="match status" value="1"/>
</dbReference>
<keyword id="KW-0129">CBS domain</keyword>
<keyword id="KW-0325">Glycoprotein</keyword>
<keyword id="KW-0472">Membrane</keyword>
<keyword id="KW-1185">Reference proteome</keyword>
<keyword id="KW-0677">Repeat</keyword>
<keyword id="KW-0812">Transmembrane</keyword>
<keyword id="KW-1133">Transmembrane helix</keyword>
<accession>Q9ZQR4</accession>
<accession>F4IGE5</accession>
<evidence type="ECO:0000255" key="1"/>
<evidence type="ECO:0000255" key="2">
    <source>
        <dbReference type="PROSITE-ProRule" id="PRU00703"/>
    </source>
</evidence>
<evidence type="ECO:0000255" key="3">
    <source>
        <dbReference type="PROSITE-ProRule" id="PRU01193"/>
    </source>
</evidence>
<evidence type="ECO:0000305" key="4"/>
<organism>
    <name type="scientific">Arabidopsis thaliana</name>
    <name type="common">Mouse-ear cress</name>
    <dbReference type="NCBI Taxonomy" id="3702"/>
    <lineage>
        <taxon>Eukaryota</taxon>
        <taxon>Viridiplantae</taxon>
        <taxon>Streptophyta</taxon>
        <taxon>Embryophyta</taxon>
        <taxon>Tracheophyta</taxon>
        <taxon>Spermatophyta</taxon>
        <taxon>Magnoliopsida</taxon>
        <taxon>eudicotyledons</taxon>
        <taxon>Gunneridae</taxon>
        <taxon>Pentapetalae</taxon>
        <taxon>rosids</taxon>
        <taxon>malvids</taxon>
        <taxon>Brassicales</taxon>
        <taxon>Brassicaceae</taxon>
        <taxon>Camelineae</taxon>
        <taxon>Arabidopsis</taxon>
    </lineage>
</organism>
<reference key="1">
    <citation type="journal article" date="1999" name="Nature">
        <title>Sequence and analysis of chromosome 2 of the plant Arabidopsis thaliana.</title>
        <authorList>
            <person name="Lin X."/>
            <person name="Kaul S."/>
            <person name="Rounsley S.D."/>
            <person name="Shea T.P."/>
            <person name="Benito M.-I."/>
            <person name="Town C.D."/>
            <person name="Fujii C.Y."/>
            <person name="Mason T.M."/>
            <person name="Bowman C.L."/>
            <person name="Barnstead M.E."/>
            <person name="Feldblyum T.V."/>
            <person name="Buell C.R."/>
            <person name="Ketchum K.A."/>
            <person name="Lee J.J."/>
            <person name="Ronning C.M."/>
            <person name="Koo H.L."/>
            <person name="Moffat K.S."/>
            <person name="Cronin L.A."/>
            <person name="Shen M."/>
            <person name="Pai G."/>
            <person name="Van Aken S."/>
            <person name="Umayam L."/>
            <person name="Tallon L.J."/>
            <person name="Gill J.E."/>
            <person name="Adams M.D."/>
            <person name="Carrera A.J."/>
            <person name="Creasy T.H."/>
            <person name="Goodman H.M."/>
            <person name="Somerville C.R."/>
            <person name="Copenhaver G.P."/>
            <person name="Preuss D."/>
            <person name="Nierman W.C."/>
            <person name="White O."/>
            <person name="Eisen J.A."/>
            <person name="Salzberg S.L."/>
            <person name="Fraser C.M."/>
            <person name="Venter J.C."/>
        </authorList>
    </citation>
    <scope>NUCLEOTIDE SEQUENCE [LARGE SCALE GENOMIC DNA]</scope>
    <source>
        <strain>cv. Columbia</strain>
    </source>
</reference>
<reference key="2">
    <citation type="journal article" date="2017" name="Plant J.">
        <title>Araport11: a complete reannotation of the Arabidopsis thaliana reference genome.</title>
        <authorList>
            <person name="Cheng C.Y."/>
            <person name="Krishnakumar V."/>
            <person name="Chan A.P."/>
            <person name="Thibaud-Nissen F."/>
            <person name="Schobel S."/>
            <person name="Town C.D."/>
        </authorList>
    </citation>
    <scope>GENOME REANNOTATION</scope>
    <source>
        <strain>cv. Columbia</strain>
    </source>
</reference>
<reference key="3">
    <citation type="journal article" date="2003" name="Science">
        <title>Empirical analysis of transcriptional activity in the Arabidopsis genome.</title>
        <authorList>
            <person name="Yamada K."/>
            <person name="Lim J."/>
            <person name="Dale J.M."/>
            <person name="Chen H."/>
            <person name="Shinn P."/>
            <person name="Palm C.J."/>
            <person name="Southwick A.M."/>
            <person name="Wu H.C."/>
            <person name="Kim C.J."/>
            <person name="Nguyen M."/>
            <person name="Pham P.K."/>
            <person name="Cheuk R.F."/>
            <person name="Karlin-Newmann G."/>
            <person name="Liu S.X."/>
            <person name="Lam B."/>
            <person name="Sakano H."/>
            <person name="Wu T."/>
            <person name="Yu G."/>
            <person name="Miranda M."/>
            <person name="Quach H.L."/>
            <person name="Tripp M."/>
            <person name="Chang C.H."/>
            <person name="Lee J.M."/>
            <person name="Toriumi M.J."/>
            <person name="Chan M.M."/>
            <person name="Tang C.C."/>
            <person name="Onodera C.S."/>
            <person name="Deng J.M."/>
            <person name="Akiyama K."/>
            <person name="Ansari Y."/>
            <person name="Arakawa T."/>
            <person name="Banh J."/>
            <person name="Banno F."/>
            <person name="Bowser L."/>
            <person name="Brooks S.Y."/>
            <person name="Carninci P."/>
            <person name="Chao Q."/>
            <person name="Choy N."/>
            <person name="Enju A."/>
            <person name="Goldsmith A.D."/>
            <person name="Gurjal M."/>
            <person name="Hansen N.F."/>
            <person name="Hayashizaki Y."/>
            <person name="Johnson-Hopson C."/>
            <person name="Hsuan V.W."/>
            <person name="Iida K."/>
            <person name="Karnes M."/>
            <person name="Khan S."/>
            <person name="Koesema E."/>
            <person name="Ishida J."/>
            <person name="Jiang P.X."/>
            <person name="Jones T."/>
            <person name="Kawai J."/>
            <person name="Kamiya A."/>
            <person name="Meyers C."/>
            <person name="Nakajima M."/>
            <person name="Narusaka M."/>
            <person name="Seki M."/>
            <person name="Sakurai T."/>
            <person name="Satou M."/>
            <person name="Tamse R."/>
            <person name="Vaysberg M."/>
            <person name="Wallender E.K."/>
            <person name="Wong C."/>
            <person name="Yamamura Y."/>
            <person name="Yuan S."/>
            <person name="Shinozaki K."/>
            <person name="Davis R.W."/>
            <person name="Theologis A."/>
            <person name="Ecker J.R."/>
        </authorList>
    </citation>
    <scope>NUCLEOTIDE SEQUENCE [LARGE SCALE MRNA] OF 105-423</scope>
    <source>
        <strain>cv. Columbia</strain>
    </source>
</reference>
<reference key="4">
    <citation type="journal article" date="2009" name="BMC Genomics">
        <title>Genome wide expression analysis of CBS domain containing proteins in Arabidopsis thaliana (L.) Heynh and Oryza sativa L. reveals their developmental and stress regulation.</title>
        <authorList>
            <person name="Kushwaha H.R."/>
            <person name="Singh A.K."/>
            <person name="Sopory S.K."/>
            <person name="Singla-Pareek S.L."/>
            <person name="Pareek A."/>
        </authorList>
    </citation>
    <scope>GENE FAMILY</scope>
    <scope>NOMENCLATURE</scope>
</reference>
<comment type="subcellular location">
    <subcellularLocation>
        <location evidence="4">Membrane</location>
        <topology evidence="4">Multi-pass membrane protein</topology>
    </subcellularLocation>
</comment>
<comment type="sequence caution" evidence="4">
    <conflict type="erroneous gene model prediction">
        <sequence resource="EMBL-CDS" id="AAD15464"/>
    </conflict>
</comment>
<comment type="sequence caution" evidence="4">
    <conflict type="frameshift">
        <sequence resource="EMBL" id="AY080819"/>
    </conflict>
</comment>
<gene>
    <name type="primary">CBSDUF3</name>
    <name type="ordered locus">At2g14520</name>
    <name type="ORF">T13P21.10</name>
</gene>
<sequence length="423" mass="47314">MAVEYECCGTSFFIHIAVIVLLVLFAGLMSGLTLGLMSMSLVDLEVLAKSGTPRDRIHAAKILPVVKNQHLLLCTLLICNAAAMEALPIFLDALVTAWGAILISVTLILLFGEIIPQSVCSRHGLAIGATVAPFVRVLVWICLPVAWPISKLLDFLLGHGRVALFRRAELKTLVDLHGNEAGKGGELTHDETTIIAGALELSEKMAKDAMTPISDTFVIDINAKLDRDLMNLILDKGHSRVPVYYEQRTNIIGLVLVKNLLTINPDEEIQVKNVTIRRIPRVPETLPLYDILNEFQKGHSHMAVVVRQCDKIHPLQSNDAANETVNEVRVDVDYERSPQETKLKRRRSLQKWKSFPNRANSLGSRSKRWSKDNDADILQLNEHPLPKLDEEEDAVGIITMEDVIEELLQEEIFDETDHHFEDL</sequence>